<proteinExistence type="inferred from homology"/>
<geneLocation type="chloroplast"/>
<sequence length="468" mass="51841">KASVGFKAGVKDYKLTYYTPEYKTLDTDILAAFRVTPQPGVPPEEAGAAVAAESSTGTWTTVWTDGLTTLDRYKGRCYHIEPVPGEDNQYIAYVAYPLDLFEEGSVTNMFTSIVGNVFGFKALRALRLEDLRIPPAYIKTFQGPPHGIQVERDKLNKYGRPLLGCTIKPKLGLSAKNYGRAVYECLRGGLDFTKDDENVNSQPFMRWRDRFVFCAEALYKAQAETGEIKGHYLNAPAGTSEEMMKRAIFARELGVPIVMHDYLTGGFTANTSLAHYCRDNGLLLHIHRAMHAVIDRQKNHGMHFRVLAKALRMSGGDHIHAGXVVGKLEGEREITLGFVDLLRDDYIEKDRSRGIYFTQDXVSMPGVLPVASGGIHVWHMPALTEIFGDDSVLQFGGGTLGHPWGNAPGAVANRVALEACVQARNEGRDLAREGNEIIRAASKWSPELAAACEVWKEIKFEFPAMDTL</sequence>
<accession>O98883</accession>
<feature type="chain" id="PRO_0000062425" description="Ribulose bisphosphate carboxylase large chain">
    <location>
        <begin position="1" status="less than"/>
        <end position="468" status="greater than"/>
    </location>
</feature>
<feature type="active site" description="Proton acceptor" evidence="1">
    <location>
        <position position="168"/>
    </location>
</feature>
<feature type="active site" description="Proton acceptor" evidence="1">
    <location>
        <position position="287"/>
    </location>
</feature>
<feature type="binding site" description="in homodimeric partner" evidence="1">
    <location>
        <position position="116"/>
    </location>
    <ligand>
        <name>substrate</name>
    </ligand>
</feature>
<feature type="binding site" evidence="1">
    <location>
        <position position="166"/>
    </location>
    <ligand>
        <name>substrate</name>
    </ligand>
</feature>
<feature type="binding site" evidence="1">
    <location>
        <position position="170"/>
    </location>
    <ligand>
        <name>substrate</name>
    </ligand>
</feature>
<feature type="binding site" description="via carbamate group" evidence="1">
    <location>
        <position position="194"/>
    </location>
    <ligand>
        <name>Mg(2+)</name>
        <dbReference type="ChEBI" id="CHEBI:18420"/>
    </ligand>
</feature>
<feature type="binding site" evidence="1">
    <location>
        <position position="196"/>
    </location>
    <ligand>
        <name>Mg(2+)</name>
        <dbReference type="ChEBI" id="CHEBI:18420"/>
    </ligand>
</feature>
<feature type="binding site" evidence="1">
    <location>
        <position position="197"/>
    </location>
    <ligand>
        <name>Mg(2+)</name>
        <dbReference type="ChEBI" id="CHEBI:18420"/>
    </ligand>
</feature>
<feature type="binding site" evidence="1">
    <location>
        <position position="288"/>
    </location>
    <ligand>
        <name>substrate</name>
    </ligand>
</feature>
<feature type="binding site" evidence="1">
    <location>
        <position position="320"/>
    </location>
    <ligand>
        <name>substrate</name>
    </ligand>
</feature>
<feature type="binding site" evidence="1">
    <location>
        <position position="372"/>
    </location>
    <ligand>
        <name>substrate</name>
    </ligand>
</feature>
<feature type="site" description="Transition state stabilizer" evidence="1">
    <location>
        <position position="327"/>
    </location>
</feature>
<feature type="modified residue" description="N6,N6,N6-trimethyllysine" evidence="1">
    <location>
        <position position="7"/>
    </location>
</feature>
<feature type="modified residue" description="N6-carboxylysine" evidence="1">
    <location>
        <position position="194"/>
    </location>
</feature>
<feature type="non-terminal residue">
    <location>
        <position position="1"/>
    </location>
</feature>
<feature type="non-terminal residue">
    <location>
        <position position="468"/>
    </location>
</feature>
<keyword id="KW-0113">Calvin cycle</keyword>
<keyword id="KW-0120">Carbon dioxide fixation</keyword>
<keyword id="KW-0150">Chloroplast</keyword>
<keyword id="KW-0456">Lyase</keyword>
<keyword id="KW-0460">Magnesium</keyword>
<keyword id="KW-0479">Metal-binding</keyword>
<keyword id="KW-0488">Methylation</keyword>
<keyword id="KW-0503">Monooxygenase</keyword>
<keyword id="KW-0560">Oxidoreductase</keyword>
<keyword id="KW-0601">Photorespiration</keyword>
<keyword id="KW-0602">Photosynthesis</keyword>
<keyword id="KW-0934">Plastid</keyword>
<organism>
    <name type="scientific">Couroupita guianensis</name>
    <name type="common">Cannonball tree</name>
    <dbReference type="NCBI Taxonomy" id="66684"/>
    <lineage>
        <taxon>Eukaryota</taxon>
        <taxon>Viridiplantae</taxon>
        <taxon>Streptophyta</taxon>
        <taxon>Embryophyta</taxon>
        <taxon>Tracheophyta</taxon>
        <taxon>Spermatophyta</taxon>
        <taxon>Magnoliopsida</taxon>
        <taxon>eudicotyledons</taxon>
        <taxon>Gunneridae</taxon>
        <taxon>Pentapetalae</taxon>
        <taxon>asterids</taxon>
        <taxon>Ericales</taxon>
        <taxon>Lecythidaceae</taxon>
        <taxon>Couroupita</taxon>
    </lineage>
</organism>
<evidence type="ECO:0000255" key="1">
    <source>
        <dbReference type="HAMAP-Rule" id="MF_01338"/>
    </source>
</evidence>
<comment type="function">
    <text evidence="1">RuBisCO catalyzes two reactions: the carboxylation of D-ribulose 1,5-bisphosphate, the primary event in carbon dioxide fixation, as well as the oxidative fragmentation of the pentose substrate in the photorespiration process. Both reactions occur simultaneously and in competition at the same active site.</text>
</comment>
<comment type="catalytic activity">
    <reaction evidence="1">
        <text>2 (2R)-3-phosphoglycerate + 2 H(+) = D-ribulose 1,5-bisphosphate + CO2 + H2O</text>
        <dbReference type="Rhea" id="RHEA:23124"/>
        <dbReference type="ChEBI" id="CHEBI:15377"/>
        <dbReference type="ChEBI" id="CHEBI:15378"/>
        <dbReference type="ChEBI" id="CHEBI:16526"/>
        <dbReference type="ChEBI" id="CHEBI:57870"/>
        <dbReference type="ChEBI" id="CHEBI:58272"/>
        <dbReference type="EC" id="4.1.1.39"/>
    </reaction>
</comment>
<comment type="catalytic activity">
    <reaction evidence="1">
        <text>D-ribulose 1,5-bisphosphate + O2 = 2-phosphoglycolate + (2R)-3-phosphoglycerate + 2 H(+)</text>
        <dbReference type="Rhea" id="RHEA:36631"/>
        <dbReference type="ChEBI" id="CHEBI:15378"/>
        <dbReference type="ChEBI" id="CHEBI:15379"/>
        <dbReference type="ChEBI" id="CHEBI:57870"/>
        <dbReference type="ChEBI" id="CHEBI:58033"/>
        <dbReference type="ChEBI" id="CHEBI:58272"/>
    </reaction>
</comment>
<comment type="cofactor">
    <cofactor evidence="1">
        <name>Mg(2+)</name>
        <dbReference type="ChEBI" id="CHEBI:18420"/>
    </cofactor>
    <text evidence="1">Binds 1 Mg(2+) ion per subunit.</text>
</comment>
<comment type="subunit">
    <text evidence="1">Heterohexadecamer of 8 large chains and 8 small chains.</text>
</comment>
<comment type="subcellular location">
    <subcellularLocation>
        <location>Plastid</location>
        <location>Chloroplast</location>
    </subcellularLocation>
</comment>
<comment type="miscellaneous">
    <text evidence="1">The basic functional RuBisCO is composed of a large chain homodimer in a 'head-to-tail' conformation. In form I RuBisCO this homodimer is arranged in a barrel-like tetramer with the small subunits forming a tetrameric 'cap' on each end of the 'barrel'.</text>
</comment>
<comment type="similarity">
    <text evidence="1">Belongs to the RuBisCO large chain family. Type I subfamily.</text>
</comment>
<protein>
    <recommendedName>
        <fullName evidence="1">Ribulose bisphosphate carboxylase large chain</fullName>
        <shortName evidence="1">RuBisCO large subunit</shortName>
        <ecNumber evidence="1">4.1.1.39</ecNumber>
    </recommendedName>
</protein>
<name>RBL_COUGU</name>
<dbReference type="EC" id="4.1.1.39" evidence="1"/>
<dbReference type="EMBL" id="Z80181">
    <property type="protein sequence ID" value="CAB02228.1"/>
    <property type="molecule type" value="Genomic_DNA"/>
</dbReference>
<dbReference type="GO" id="GO:0009507">
    <property type="term" value="C:chloroplast"/>
    <property type="evidence" value="ECO:0007669"/>
    <property type="project" value="UniProtKB-SubCell"/>
</dbReference>
<dbReference type="GO" id="GO:0000287">
    <property type="term" value="F:magnesium ion binding"/>
    <property type="evidence" value="ECO:0007669"/>
    <property type="project" value="InterPro"/>
</dbReference>
<dbReference type="GO" id="GO:0004497">
    <property type="term" value="F:monooxygenase activity"/>
    <property type="evidence" value="ECO:0007669"/>
    <property type="project" value="UniProtKB-KW"/>
</dbReference>
<dbReference type="GO" id="GO:0016984">
    <property type="term" value="F:ribulose-bisphosphate carboxylase activity"/>
    <property type="evidence" value="ECO:0007669"/>
    <property type="project" value="UniProtKB-EC"/>
</dbReference>
<dbReference type="GO" id="GO:0009853">
    <property type="term" value="P:photorespiration"/>
    <property type="evidence" value="ECO:0007669"/>
    <property type="project" value="UniProtKB-KW"/>
</dbReference>
<dbReference type="GO" id="GO:0019253">
    <property type="term" value="P:reductive pentose-phosphate cycle"/>
    <property type="evidence" value="ECO:0007669"/>
    <property type="project" value="UniProtKB-KW"/>
</dbReference>
<dbReference type="CDD" id="cd08212">
    <property type="entry name" value="RuBisCO_large_I"/>
    <property type="match status" value="1"/>
</dbReference>
<dbReference type="FunFam" id="3.20.20.110:FF:000001">
    <property type="entry name" value="Ribulose bisphosphate carboxylase large chain"/>
    <property type="match status" value="1"/>
</dbReference>
<dbReference type="FunFam" id="3.30.70.150:FF:000001">
    <property type="entry name" value="Ribulose bisphosphate carboxylase large chain"/>
    <property type="match status" value="1"/>
</dbReference>
<dbReference type="Gene3D" id="3.20.20.110">
    <property type="entry name" value="Ribulose bisphosphate carboxylase, large subunit, C-terminal domain"/>
    <property type="match status" value="1"/>
</dbReference>
<dbReference type="Gene3D" id="3.30.70.150">
    <property type="entry name" value="RuBisCO large subunit, N-terminal domain"/>
    <property type="match status" value="1"/>
</dbReference>
<dbReference type="HAMAP" id="MF_01338">
    <property type="entry name" value="RuBisCO_L_type1"/>
    <property type="match status" value="1"/>
</dbReference>
<dbReference type="InterPro" id="IPR033966">
    <property type="entry name" value="RuBisCO"/>
</dbReference>
<dbReference type="InterPro" id="IPR020878">
    <property type="entry name" value="RuBisCo_large_chain_AS"/>
</dbReference>
<dbReference type="InterPro" id="IPR000685">
    <property type="entry name" value="RuBisCO_lsu_C"/>
</dbReference>
<dbReference type="InterPro" id="IPR036376">
    <property type="entry name" value="RuBisCO_lsu_C_sf"/>
</dbReference>
<dbReference type="InterPro" id="IPR017443">
    <property type="entry name" value="RuBisCO_lsu_fd_N"/>
</dbReference>
<dbReference type="InterPro" id="IPR036422">
    <property type="entry name" value="RuBisCO_lsu_N_sf"/>
</dbReference>
<dbReference type="InterPro" id="IPR020888">
    <property type="entry name" value="RuBisCO_lsuI"/>
</dbReference>
<dbReference type="NCBIfam" id="NF003252">
    <property type="entry name" value="PRK04208.1"/>
    <property type="match status" value="1"/>
</dbReference>
<dbReference type="PANTHER" id="PTHR42704">
    <property type="entry name" value="RIBULOSE BISPHOSPHATE CARBOXYLASE"/>
    <property type="match status" value="1"/>
</dbReference>
<dbReference type="PANTHER" id="PTHR42704:SF15">
    <property type="entry name" value="RIBULOSE BISPHOSPHATE CARBOXYLASE LARGE CHAIN"/>
    <property type="match status" value="1"/>
</dbReference>
<dbReference type="Pfam" id="PF00016">
    <property type="entry name" value="RuBisCO_large"/>
    <property type="match status" value="1"/>
</dbReference>
<dbReference type="Pfam" id="PF02788">
    <property type="entry name" value="RuBisCO_large_N"/>
    <property type="match status" value="1"/>
</dbReference>
<dbReference type="SFLD" id="SFLDG01052">
    <property type="entry name" value="RuBisCO"/>
    <property type="match status" value="1"/>
</dbReference>
<dbReference type="SFLD" id="SFLDS00014">
    <property type="entry name" value="RuBisCO"/>
    <property type="match status" value="1"/>
</dbReference>
<dbReference type="SFLD" id="SFLDG00301">
    <property type="entry name" value="RuBisCO-like_proteins"/>
    <property type="match status" value="1"/>
</dbReference>
<dbReference type="SUPFAM" id="SSF51649">
    <property type="entry name" value="RuBisCo, C-terminal domain"/>
    <property type="match status" value="1"/>
</dbReference>
<dbReference type="SUPFAM" id="SSF54966">
    <property type="entry name" value="RuBisCO, large subunit, small (N-terminal) domain"/>
    <property type="match status" value="1"/>
</dbReference>
<dbReference type="PROSITE" id="PS00157">
    <property type="entry name" value="RUBISCO_LARGE"/>
    <property type="match status" value="1"/>
</dbReference>
<gene>
    <name evidence="1" type="primary">rbcL</name>
</gene>
<reference key="1">
    <citation type="journal article" date="1997" name="Am. J. Bot.">
        <title>Phylogenetic relationships of Lecythidaceae: a cladistic analysis using rbcL sequence and morphological data.</title>
        <authorList>
            <person name="Morton C.M."/>
            <person name="Mori S.A."/>
            <person name="Prance G.T."/>
            <person name="Karol K.G."/>
            <person name="Chase M.W."/>
        </authorList>
    </citation>
    <scope>NUCLEOTIDE SEQUENCE [GENOMIC DNA]</scope>
</reference>